<organism>
    <name type="scientific">Pseudomonas fluorescens (strain ATCC BAA-477 / NRRL B-23932 / Pf-5)</name>
    <dbReference type="NCBI Taxonomy" id="220664"/>
    <lineage>
        <taxon>Bacteria</taxon>
        <taxon>Pseudomonadati</taxon>
        <taxon>Pseudomonadota</taxon>
        <taxon>Gammaproteobacteria</taxon>
        <taxon>Pseudomonadales</taxon>
        <taxon>Pseudomonadaceae</taxon>
        <taxon>Pseudomonas</taxon>
    </lineage>
</organism>
<evidence type="ECO:0000255" key="1">
    <source>
        <dbReference type="HAMAP-Rule" id="MF_01341"/>
    </source>
</evidence>
<evidence type="ECO:0000256" key="2">
    <source>
        <dbReference type="SAM" id="MobiDB-lite"/>
    </source>
</evidence>
<evidence type="ECO:0000305" key="3"/>
<reference key="1">
    <citation type="journal article" date="2005" name="Nat. Biotechnol.">
        <title>Complete genome sequence of the plant commensal Pseudomonas fluorescens Pf-5.</title>
        <authorList>
            <person name="Paulsen I.T."/>
            <person name="Press C.M."/>
            <person name="Ravel J."/>
            <person name="Kobayashi D.Y."/>
            <person name="Myers G.S.A."/>
            <person name="Mavrodi D.V."/>
            <person name="DeBoy R.T."/>
            <person name="Seshadri R."/>
            <person name="Ren Q."/>
            <person name="Madupu R."/>
            <person name="Dodson R.J."/>
            <person name="Durkin A.S."/>
            <person name="Brinkac L.M."/>
            <person name="Daugherty S.C."/>
            <person name="Sullivan S.A."/>
            <person name="Rosovitz M.J."/>
            <person name="Gwinn M.L."/>
            <person name="Zhou L."/>
            <person name="Schneider D.J."/>
            <person name="Cartinhour S.W."/>
            <person name="Nelson W.C."/>
            <person name="Weidman J."/>
            <person name="Watkins K."/>
            <person name="Tran K."/>
            <person name="Khouri H."/>
            <person name="Pierson E.A."/>
            <person name="Pierson L.S. III"/>
            <person name="Thomashow L.S."/>
            <person name="Loper J.E."/>
        </authorList>
    </citation>
    <scope>NUCLEOTIDE SEQUENCE [LARGE SCALE GENOMIC DNA]</scope>
    <source>
        <strain>ATCC BAA-477 / NRRL B-23932 / Pf-5</strain>
    </source>
</reference>
<accession>Q4K552</accession>
<sequence>MKLNDLSPAPGSRREKHRPGRGIGSGLGKTGGRGHKGQTSRSGGTIAPGFEGGQQPLHRRLPKFGFVSLKAMDRAEVRLSELAKVEGDIVTVQSLKDANVINQNVQRVKIMLSGEVTRAVTIKGIAATKGARAAIEAAGGKFEE</sequence>
<dbReference type="EMBL" id="CP000076">
    <property type="protein sequence ID" value="AAY94769.1"/>
    <property type="molecule type" value="Genomic_DNA"/>
</dbReference>
<dbReference type="RefSeq" id="WP_007924183.1">
    <property type="nucleotide sequence ID" value="NC_004129.6"/>
</dbReference>
<dbReference type="SMR" id="Q4K552"/>
<dbReference type="STRING" id="220664.PFL_5563"/>
<dbReference type="GeneID" id="93661226"/>
<dbReference type="KEGG" id="pfl:PFL_5563"/>
<dbReference type="eggNOG" id="COG0200">
    <property type="taxonomic scope" value="Bacteria"/>
</dbReference>
<dbReference type="HOGENOM" id="CLU_055188_4_2_6"/>
<dbReference type="Proteomes" id="UP000008540">
    <property type="component" value="Chromosome"/>
</dbReference>
<dbReference type="GO" id="GO:0022625">
    <property type="term" value="C:cytosolic large ribosomal subunit"/>
    <property type="evidence" value="ECO:0007669"/>
    <property type="project" value="TreeGrafter"/>
</dbReference>
<dbReference type="GO" id="GO:0019843">
    <property type="term" value="F:rRNA binding"/>
    <property type="evidence" value="ECO:0007669"/>
    <property type="project" value="UniProtKB-UniRule"/>
</dbReference>
<dbReference type="GO" id="GO:0003735">
    <property type="term" value="F:structural constituent of ribosome"/>
    <property type="evidence" value="ECO:0007669"/>
    <property type="project" value="InterPro"/>
</dbReference>
<dbReference type="GO" id="GO:0006412">
    <property type="term" value="P:translation"/>
    <property type="evidence" value="ECO:0007669"/>
    <property type="project" value="UniProtKB-UniRule"/>
</dbReference>
<dbReference type="Gene3D" id="3.100.10.10">
    <property type="match status" value="1"/>
</dbReference>
<dbReference type="HAMAP" id="MF_01341">
    <property type="entry name" value="Ribosomal_uL15"/>
    <property type="match status" value="1"/>
</dbReference>
<dbReference type="InterPro" id="IPR030878">
    <property type="entry name" value="Ribosomal_uL15"/>
</dbReference>
<dbReference type="InterPro" id="IPR021131">
    <property type="entry name" value="Ribosomal_uL15/eL18"/>
</dbReference>
<dbReference type="InterPro" id="IPR036227">
    <property type="entry name" value="Ribosomal_uL15/eL18_sf"/>
</dbReference>
<dbReference type="InterPro" id="IPR005749">
    <property type="entry name" value="Ribosomal_uL15_bac-type"/>
</dbReference>
<dbReference type="InterPro" id="IPR001196">
    <property type="entry name" value="Ribosomal_uL15_CS"/>
</dbReference>
<dbReference type="NCBIfam" id="TIGR01071">
    <property type="entry name" value="rplO_bact"/>
    <property type="match status" value="1"/>
</dbReference>
<dbReference type="PANTHER" id="PTHR12934">
    <property type="entry name" value="50S RIBOSOMAL PROTEIN L15"/>
    <property type="match status" value="1"/>
</dbReference>
<dbReference type="PANTHER" id="PTHR12934:SF11">
    <property type="entry name" value="LARGE RIBOSOMAL SUBUNIT PROTEIN UL15M"/>
    <property type="match status" value="1"/>
</dbReference>
<dbReference type="Pfam" id="PF00828">
    <property type="entry name" value="Ribosomal_L27A"/>
    <property type="match status" value="1"/>
</dbReference>
<dbReference type="SUPFAM" id="SSF52080">
    <property type="entry name" value="Ribosomal proteins L15p and L18e"/>
    <property type="match status" value="1"/>
</dbReference>
<dbReference type="PROSITE" id="PS00475">
    <property type="entry name" value="RIBOSOMAL_L15"/>
    <property type="match status" value="1"/>
</dbReference>
<feature type="chain" id="PRO_0000104783" description="Large ribosomal subunit protein uL15">
    <location>
        <begin position="1"/>
        <end position="144"/>
    </location>
</feature>
<feature type="region of interest" description="Disordered" evidence="2">
    <location>
        <begin position="1"/>
        <end position="57"/>
    </location>
</feature>
<feature type="compositionally biased region" description="Gly residues" evidence="2">
    <location>
        <begin position="21"/>
        <end position="31"/>
    </location>
</feature>
<name>RL15_PSEF5</name>
<gene>
    <name evidence="1" type="primary">rplO</name>
    <name type="ordered locus">PFL_5563</name>
</gene>
<proteinExistence type="inferred from homology"/>
<comment type="function">
    <text evidence="1">Binds to the 23S rRNA.</text>
</comment>
<comment type="subunit">
    <text evidence="1">Part of the 50S ribosomal subunit.</text>
</comment>
<comment type="similarity">
    <text evidence="1">Belongs to the universal ribosomal protein uL15 family.</text>
</comment>
<protein>
    <recommendedName>
        <fullName evidence="1">Large ribosomal subunit protein uL15</fullName>
    </recommendedName>
    <alternativeName>
        <fullName evidence="3">50S ribosomal protein L15</fullName>
    </alternativeName>
</protein>
<keyword id="KW-0687">Ribonucleoprotein</keyword>
<keyword id="KW-0689">Ribosomal protein</keyword>
<keyword id="KW-0694">RNA-binding</keyword>
<keyword id="KW-0699">rRNA-binding</keyword>